<keyword id="KW-0028">Amino-acid biosynthesis</keyword>
<keyword id="KW-0963">Cytoplasm</keyword>
<keyword id="KW-0223">Dioxygenase</keyword>
<keyword id="KW-0408">Iron</keyword>
<keyword id="KW-0479">Metal-binding</keyword>
<keyword id="KW-0486">Methionine biosynthesis</keyword>
<keyword id="KW-0533">Nickel</keyword>
<keyword id="KW-0539">Nucleus</keyword>
<keyword id="KW-0560">Oxidoreductase</keyword>
<keyword id="KW-1185">Reference proteome</keyword>
<organism>
    <name type="scientific">Physcomitrium patens</name>
    <name type="common">Spreading-leaved earth moss</name>
    <name type="synonym">Physcomitrella patens</name>
    <dbReference type="NCBI Taxonomy" id="3218"/>
    <lineage>
        <taxon>Eukaryota</taxon>
        <taxon>Viridiplantae</taxon>
        <taxon>Streptophyta</taxon>
        <taxon>Embryophyta</taxon>
        <taxon>Bryophyta</taxon>
        <taxon>Bryophytina</taxon>
        <taxon>Bryopsida</taxon>
        <taxon>Funariidae</taxon>
        <taxon>Funariales</taxon>
        <taxon>Funariaceae</taxon>
        <taxon>Physcomitrium</taxon>
    </lineage>
</organism>
<feature type="chain" id="PRO_0000414344" description="Acireductone dioxygenase 3">
    <location>
        <begin position="1"/>
        <end position="203"/>
    </location>
</feature>
<feature type="binding site" evidence="1">
    <location>
        <position position="96"/>
    </location>
    <ligand>
        <name>Fe(2+)</name>
        <dbReference type="ChEBI" id="CHEBI:29033"/>
        <note>for iron-dependent acireductone dioxygenase activity</note>
    </ligand>
</feature>
<feature type="binding site" evidence="1">
    <location>
        <position position="96"/>
    </location>
    <ligand>
        <name>Ni(2+)</name>
        <dbReference type="ChEBI" id="CHEBI:49786"/>
        <note>for nickel-dependent acireductone dioxygenase activity</note>
    </ligand>
</feature>
<feature type="binding site" evidence="1">
    <location>
        <position position="98"/>
    </location>
    <ligand>
        <name>Fe(2+)</name>
        <dbReference type="ChEBI" id="CHEBI:29033"/>
        <note>for iron-dependent acireductone dioxygenase activity</note>
    </ligand>
</feature>
<feature type="binding site" evidence="1">
    <location>
        <position position="98"/>
    </location>
    <ligand>
        <name>Ni(2+)</name>
        <dbReference type="ChEBI" id="CHEBI:49786"/>
        <note>for nickel-dependent acireductone dioxygenase activity</note>
    </ligand>
</feature>
<feature type="binding site" evidence="1">
    <location>
        <position position="102"/>
    </location>
    <ligand>
        <name>Fe(2+)</name>
        <dbReference type="ChEBI" id="CHEBI:29033"/>
        <note>for iron-dependent acireductone dioxygenase activity</note>
    </ligand>
</feature>
<feature type="binding site" evidence="1">
    <location>
        <position position="102"/>
    </location>
    <ligand>
        <name>Ni(2+)</name>
        <dbReference type="ChEBI" id="CHEBI:49786"/>
        <note>for nickel-dependent acireductone dioxygenase activity</note>
    </ligand>
</feature>
<feature type="binding site" evidence="1">
    <location>
        <position position="141"/>
    </location>
    <ligand>
        <name>Fe(2+)</name>
        <dbReference type="ChEBI" id="CHEBI:29033"/>
        <note>for iron-dependent acireductone dioxygenase activity</note>
    </ligand>
</feature>
<feature type="binding site" evidence="1">
    <location>
        <position position="141"/>
    </location>
    <ligand>
        <name>Ni(2+)</name>
        <dbReference type="ChEBI" id="CHEBI:49786"/>
        <note>for nickel-dependent acireductone dioxygenase activity</note>
    </ligand>
</feature>
<sequence>MGLEVQRPLMEAWYMDDSAEDQRMPHHRNPPEYVSLKKLAELGILHWVLDADNYETDPDLKHIRKERGYSYEDFVDVSPEALPNYETKIKNFYEEHIHTDEEIRYCLDGSGYFDVRDPEDRWIRIWVHKGDMIVLPAGCYHRFSLDANNYLKAMRLFVGEPIWTPYNRPQDEHPVRKEYINLFLKPHLDKSDLSLATQNAETV</sequence>
<comment type="function">
    <text evidence="1">Catalyzes 2 different reactions between oxygen and the acireductone 1,2-dihydroxy-3-keto-5-methylthiopentene (DHK-MTPene) depending upon the metal bound in the active site. Fe-containing acireductone dioxygenase (Fe-ARD) produces formate and 2-keto-4-methylthiobutyrate (KMTB), the alpha-ketoacid precursor of methionine in the methionine recycle pathway. Ni-containing acireductone dioxygenase (Ni-ARD) produces methylthiopropionate, carbon monoxide and formate, and does not lie on the methionine recycle pathway.</text>
</comment>
<comment type="catalytic activity">
    <reaction evidence="1">
        <text>1,2-dihydroxy-5-(methylsulfanyl)pent-1-en-3-one + O2 = 4-methylsulfanyl-2-oxobutanoate + formate + 2 H(+)</text>
        <dbReference type="Rhea" id="RHEA:24504"/>
        <dbReference type="ChEBI" id="CHEBI:15378"/>
        <dbReference type="ChEBI" id="CHEBI:15379"/>
        <dbReference type="ChEBI" id="CHEBI:15740"/>
        <dbReference type="ChEBI" id="CHEBI:16723"/>
        <dbReference type="ChEBI" id="CHEBI:49252"/>
        <dbReference type="EC" id="1.13.11.54"/>
    </reaction>
</comment>
<comment type="catalytic activity">
    <reaction evidence="1">
        <text>1,2-dihydroxy-5-(methylsulfanyl)pent-1-en-3-one + O2 = 3-(methylsulfanyl)propanoate + CO + formate + 2 H(+)</text>
        <dbReference type="Rhea" id="RHEA:14161"/>
        <dbReference type="ChEBI" id="CHEBI:15378"/>
        <dbReference type="ChEBI" id="CHEBI:15379"/>
        <dbReference type="ChEBI" id="CHEBI:15740"/>
        <dbReference type="ChEBI" id="CHEBI:17245"/>
        <dbReference type="ChEBI" id="CHEBI:49016"/>
        <dbReference type="ChEBI" id="CHEBI:49252"/>
        <dbReference type="EC" id="1.13.11.53"/>
    </reaction>
</comment>
<comment type="cofactor">
    <cofactor evidence="1">
        <name>Fe(2+)</name>
        <dbReference type="ChEBI" id="CHEBI:29033"/>
    </cofactor>
    <cofactor evidence="1">
        <name>Ni(2+)</name>
        <dbReference type="ChEBI" id="CHEBI:49786"/>
    </cofactor>
    <text evidence="1">Binds either 1 Fe or Ni cation per monomer. Iron-binding promotes an acireductone dioxygenase reaction producing 2-keto-4-methylthiobutyrate, while nickel-binding promotes an acireductone dioxygenase reaction producing 3-(methylsulfanyl)propanoate.</text>
</comment>
<comment type="pathway">
    <text evidence="1">Amino-acid biosynthesis; L-methionine biosynthesis via salvage pathway; L-methionine from S-methyl-5-thio-alpha-D-ribose 1-phosphate: step 5/6.</text>
</comment>
<comment type="subcellular location">
    <subcellularLocation>
        <location evidence="1">Cytoplasm</location>
    </subcellularLocation>
    <subcellularLocation>
        <location evidence="1">Nucleus</location>
    </subcellularLocation>
</comment>
<comment type="similarity">
    <text evidence="1">Belongs to the acireductone dioxygenase (ARD) family.</text>
</comment>
<gene>
    <name type="ORF">PHYPADRAFT_164159</name>
</gene>
<evidence type="ECO:0000255" key="1">
    <source>
        <dbReference type="HAMAP-Rule" id="MF_03154"/>
    </source>
</evidence>
<name>MTND3_PHYPA</name>
<proteinExistence type="inferred from homology"/>
<protein>
    <recommendedName>
        <fullName evidence="1">Acireductone dioxygenase 3</fullName>
    </recommendedName>
    <alternativeName>
        <fullName evidence="1">Acireductone dioxygenase (Fe(2+)-requiring) 3</fullName>
        <shortName evidence="1">ARD' 3</shortName>
        <shortName evidence="1">Fe-ARD 3</shortName>
        <ecNumber evidence="1">1.13.11.54</ecNumber>
    </alternativeName>
    <alternativeName>
        <fullName evidence="1">Acireductone dioxygenase (Ni(2+)-requiring) 3</fullName>
        <shortName evidence="1">ARD 3</shortName>
        <shortName evidence="1">Ni-ARD 3</shortName>
        <ecNumber evidence="1">1.13.11.53</ecNumber>
    </alternativeName>
</protein>
<dbReference type="EC" id="1.13.11.54" evidence="1"/>
<dbReference type="EC" id="1.13.11.53" evidence="1"/>
<dbReference type="EMBL" id="DS544954">
    <property type="protein sequence ID" value="EDQ71228.1"/>
    <property type="molecule type" value="Genomic_DNA"/>
</dbReference>
<dbReference type="RefSeq" id="XP_001764089.1">
    <property type="nucleotide sequence ID" value="XM_001764037.1"/>
</dbReference>
<dbReference type="SMR" id="A9SCJ6"/>
<dbReference type="FunCoup" id="A9SCJ6">
    <property type="interactions" value="3432"/>
</dbReference>
<dbReference type="PaxDb" id="3218-PP1S65_281V6.1"/>
<dbReference type="EnsemblPlants" id="Pp3c17_20510V3.1">
    <property type="protein sequence ID" value="Pp3c17_20510V3.1"/>
    <property type="gene ID" value="Pp3c17_20510"/>
</dbReference>
<dbReference type="EnsemblPlants" id="Pp3c17_20510V3.2">
    <property type="protein sequence ID" value="Pp3c17_20510V3.2"/>
    <property type="gene ID" value="Pp3c17_20510"/>
</dbReference>
<dbReference type="Gramene" id="Pp3c17_20510V3.1">
    <property type="protein sequence ID" value="Pp3c17_20510V3.1"/>
    <property type="gene ID" value="Pp3c17_20510"/>
</dbReference>
<dbReference type="Gramene" id="Pp3c17_20510V3.2">
    <property type="protein sequence ID" value="Pp3c17_20510V3.2"/>
    <property type="gene ID" value="Pp3c17_20510"/>
</dbReference>
<dbReference type="eggNOG" id="KOG2107">
    <property type="taxonomic scope" value="Eukaryota"/>
</dbReference>
<dbReference type="HOGENOM" id="CLU_090154_0_0_1"/>
<dbReference type="InParanoid" id="A9SCJ6"/>
<dbReference type="OMA" id="YYKVDLD"/>
<dbReference type="OrthoDB" id="1867259at2759"/>
<dbReference type="UniPathway" id="UPA00904">
    <property type="reaction ID" value="UER00878"/>
</dbReference>
<dbReference type="Proteomes" id="UP000006727">
    <property type="component" value="Chromosome 17"/>
</dbReference>
<dbReference type="GO" id="GO:0005737">
    <property type="term" value="C:cytoplasm"/>
    <property type="evidence" value="ECO:0007669"/>
    <property type="project" value="UniProtKB-SubCell"/>
</dbReference>
<dbReference type="GO" id="GO:0005634">
    <property type="term" value="C:nucleus"/>
    <property type="evidence" value="ECO:0007669"/>
    <property type="project" value="UniProtKB-SubCell"/>
</dbReference>
<dbReference type="GO" id="GO:0010308">
    <property type="term" value="F:acireductone dioxygenase (Ni2+-requiring) activity"/>
    <property type="evidence" value="ECO:0007669"/>
    <property type="project" value="UniProtKB-UniRule"/>
</dbReference>
<dbReference type="GO" id="GO:0010309">
    <property type="term" value="F:acireductone dioxygenase [iron(II)-requiring] activity"/>
    <property type="evidence" value="ECO:0000318"/>
    <property type="project" value="GO_Central"/>
</dbReference>
<dbReference type="GO" id="GO:0005506">
    <property type="term" value="F:iron ion binding"/>
    <property type="evidence" value="ECO:0007669"/>
    <property type="project" value="UniProtKB-UniRule"/>
</dbReference>
<dbReference type="GO" id="GO:0016151">
    <property type="term" value="F:nickel cation binding"/>
    <property type="evidence" value="ECO:0007669"/>
    <property type="project" value="UniProtKB-UniRule"/>
</dbReference>
<dbReference type="GO" id="GO:0019509">
    <property type="term" value="P:L-methionine salvage from methylthioadenosine"/>
    <property type="evidence" value="ECO:0007669"/>
    <property type="project" value="UniProtKB-UniRule"/>
</dbReference>
<dbReference type="GO" id="GO:0006555">
    <property type="term" value="P:methionine metabolic process"/>
    <property type="evidence" value="ECO:0000318"/>
    <property type="project" value="GO_Central"/>
</dbReference>
<dbReference type="CDD" id="cd02232">
    <property type="entry name" value="cupin_ARD"/>
    <property type="match status" value="1"/>
</dbReference>
<dbReference type="FunFam" id="2.60.120.10:FF:000031">
    <property type="entry name" value="1,2-dihydroxy-3-keto-5-methylthiopentene dioxygenase"/>
    <property type="match status" value="1"/>
</dbReference>
<dbReference type="Gene3D" id="2.60.120.10">
    <property type="entry name" value="Jelly Rolls"/>
    <property type="match status" value="1"/>
</dbReference>
<dbReference type="HAMAP" id="MF_03154">
    <property type="entry name" value="Salvage_MtnD_euk"/>
    <property type="match status" value="1"/>
</dbReference>
<dbReference type="InterPro" id="IPR004313">
    <property type="entry name" value="ARD"/>
</dbReference>
<dbReference type="InterPro" id="IPR027496">
    <property type="entry name" value="ARD_euk"/>
</dbReference>
<dbReference type="InterPro" id="IPR014710">
    <property type="entry name" value="RmlC-like_jellyroll"/>
</dbReference>
<dbReference type="InterPro" id="IPR011051">
    <property type="entry name" value="RmlC_Cupin_sf"/>
</dbReference>
<dbReference type="PANTHER" id="PTHR23418">
    <property type="entry name" value="ACIREDUCTONE DIOXYGENASE"/>
    <property type="match status" value="1"/>
</dbReference>
<dbReference type="PANTHER" id="PTHR23418:SF0">
    <property type="entry name" value="ACIREDUCTONE DIOXYGENASE"/>
    <property type="match status" value="1"/>
</dbReference>
<dbReference type="Pfam" id="PF03079">
    <property type="entry name" value="ARD"/>
    <property type="match status" value="1"/>
</dbReference>
<dbReference type="SUPFAM" id="SSF51182">
    <property type="entry name" value="RmlC-like cupins"/>
    <property type="match status" value="1"/>
</dbReference>
<reference key="1">
    <citation type="journal article" date="2008" name="Science">
        <title>The Physcomitrella genome reveals evolutionary insights into the conquest of land by plants.</title>
        <authorList>
            <person name="Rensing S.A."/>
            <person name="Lang D."/>
            <person name="Zimmer A.D."/>
            <person name="Terry A."/>
            <person name="Salamov A."/>
            <person name="Shapiro H."/>
            <person name="Nishiyama T."/>
            <person name="Perroud P.-F."/>
            <person name="Lindquist E.A."/>
            <person name="Kamisugi Y."/>
            <person name="Tanahashi T."/>
            <person name="Sakakibara K."/>
            <person name="Fujita T."/>
            <person name="Oishi K."/>
            <person name="Shin-I T."/>
            <person name="Kuroki Y."/>
            <person name="Toyoda A."/>
            <person name="Suzuki Y."/>
            <person name="Hashimoto S.-I."/>
            <person name="Yamaguchi K."/>
            <person name="Sugano S."/>
            <person name="Kohara Y."/>
            <person name="Fujiyama A."/>
            <person name="Anterola A."/>
            <person name="Aoki S."/>
            <person name="Ashton N."/>
            <person name="Barbazuk W.B."/>
            <person name="Barker E."/>
            <person name="Bennetzen J.L."/>
            <person name="Blankenship R."/>
            <person name="Cho S.H."/>
            <person name="Dutcher S.K."/>
            <person name="Estelle M."/>
            <person name="Fawcett J.A."/>
            <person name="Gundlach H."/>
            <person name="Hanada K."/>
            <person name="Heyl A."/>
            <person name="Hicks K.A."/>
            <person name="Hughes J."/>
            <person name="Lohr M."/>
            <person name="Mayer K."/>
            <person name="Melkozernov A."/>
            <person name="Murata T."/>
            <person name="Nelson D.R."/>
            <person name="Pils B."/>
            <person name="Prigge M."/>
            <person name="Reiss B."/>
            <person name="Renner T."/>
            <person name="Rombauts S."/>
            <person name="Rushton P.J."/>
            <person name="Sanderfoot A."/>
            <person name="Schween G."/>
            <person name="Shiu S.-H."/>
            <person name="Stueber K."/>
            <person name="Theodoulou F.L."/>
            <person name="Tu H."/>
            <person name="Van de Peer Y."/>
            <person name="Verrier P.J."/>
            <person name="Waters E."/>
            <person name="Wood A."/>
            <person name="Yang L."/>
            <person name="Cove D."/>
            <person name="Cuming A.C."/>
            <person name="Hasebe M."/>
            <person name="Lucas S."/>
            <person name="Mishler B.D."/>
            <person name="Reski R."/>
            <person name="Grigoriev I.V."/>
            <person name="Quatrano R.S."/>
            <person name="Boore J.L."/>
        </authorList>
    </citation>
    <scope>NUCLEOTIDE SEQUENCE [LARGE SCALE GENOMIC DNA]</scope>
    <source>
        <strain>cv. Gransden 2004</strain>
    </source>
</reference>
<accession>A9SCJ6</accession>